<name>PCP1_PHOLL</name>
<accession>Q7MAZ1</accession>
<proteinExistence type="inferred from homology"/>
<dbReference type="EC" id="3.4.19.3" evidence="1"/>
<dbReference type="EMBL" id="BX571873">
    <property type="protein sequence ID" value="CAE16675.1"/>
    <property type="molecule type" value="Genomic_DNA"/>
</dbReference>
<dbReference type="RefSeq" id="WP_011148398.1">
    <property type="nucleotide sequence ID" value="NC_005126.1"/>
</dbReference>
<dbReference type="SMR" id="Q7MAZ1"/>
<dbReference type="STRING" id="243265.plu4303"/>
<dbReference type="MEROPS" id="C15.001"/>
<dbReference type="GeneID" id="48850514"/>
<dbReference type="KEGG" id="plu:plu4303"/>
<dbReference type="eggNOG" id="COG2039">
    <property type="taxonomic scope" value="Bacteria"/>
</dbReference>
<dbReference type="HOGENOM" id="CLU_043960_4_0_6"/>
<dbReference type="OrthoDB" id="9779738at2"/>
<dbReference type="Proteomes" id="UP000002514">
    <property type="component" value="Chromosome"/>
</dbReference>
<dbReference type="GO" id="GO:0005829">
    <property type="term" value="C:cytosol"/>
    <property type="evidence" value="ECO:0007669"/>
    <property type="project" value="InterPro"/>
</dbReference>
<dbReference type="GO" id="GO:0016920">
    <property type="term" value="F:pyroglutamyl-peptidase activity"/>
    <property type="evidence" value="ECO:0007669"/>
    <property type="project" value="UniProtKB-UniRule"/>
</dbReference>
<dbReference type="GO" id="GO:0006508">
    <property type="term" value="P:proteolysis"/>
    <property type="evidence" value="ECO:0007669"/>
    <property type="project" value="UniProtKB-KW"/>
</dbReference>
<dbReference type="CDD" id="cd00501">
    <property type="entry name" value="Peptidase_C15"/>
    <property type="match status" value="1"/>
</dbReference>
<dbReference type="FunFam" id="3.40.630.20:FF:000001">
    <property type="entry name" value="Pyrrolidone-carboxylate peptidase"/>
    <property type="match status" value="1"/>
</dbReference>
<dbReference type="Gene3D" id="3.40.630.20">
    <property type="entry name" value="Peptidase C15, pyroglutamyl peptidase I-like"/>
    <property type="match status" value="1"/>
</dbReference>
<dbReference type="HAMAP" id="MF_00417">
    <property type="entry name" value="Pyrrolid_peptidase"/>
    <property type="match status" value="1"/>
</dbReference>
<dbReference type="InterPro" id="IPR000816">
    <property type="entry name" value="Peptidase_C15"/>
</dbReference>
<dbReference type="InterPro" id="IPR016125">
    <property type="entry name" value="Peptidase_C15-like"/>
</dbReference>
<dbReference type="InterPro" id="IPR036440">
    <property type="entry name" value="Peptidase_C15-like_sf"/>
</dbReference>
<dbReference type="InterPro" id="IPR029762">
    <property type="entry name" value="PGP-I_bact-type"/>
</dbReference>
<dbReference type="InterPro" id="IPR033694">
    <property type="entry name" value="PGPEP1_Cys_AS"/>
</dbReference>
<dbReference type="InterPro" id="IPR033693">
    <property type="entry name" value="PGPEP1_Glu_AS"/>
</dbReference>
<dbReference type="NCBIfam" id="NF009676">
    <property type="entry name" value="PRK13197.1"/>
    <property type="match status" value="1"/>
</dbReference>
<dbReference type="NCBIfam" id="TIGR00504">
    <property type="entry name" value="pyro_pdase"/>
    <property type="match status" value="1"/>
</dbReference>
<dbReference type="PANTHER" id="PTHR23402">
    <property type="entry name" value="PROTEASE FAMILY C15 PYROGLUTAMYL-PEPTIDASE I-RELATED"/>
    <property type="match status" value="1"/>
</dbReference>
<dbReference type="PANTHER" id="PTHR23402:SF1">
    <property type="entry name" value="PYROGLUTAMYL-PEPTIDASE I"/>
    <property type="match status" value="1"/>
</dbReference>
<dbReference type="Pfam" id="PF01470">
    <property type="entry name" value="Peptidase_C15"/>
    <property type="match status" value="1"/>
</dbReference>
<dbReference type="PIRSF" id="PIRSF015592">
    <property type="entry name" value="Prld-crbxl_pptds"/>
    <property type="match status" value="1"/>
</dbReference>
<dbReference type="PRINTS" id="PR00706">
    <property type="entry name" value="PYROGLUPTASE"/>
</dbReference>
<dbReference type="SUPFAM" id="SSF53182">
    <property type="entry name" value="Pyrrolidone carboxyl peptidase (pyroglutamate aminopeptidase)"/>
    <property type="match status" value="1"/>
</dbReference>
<dbReference type="PROSITE" id="PS01334">
    <property type="entry name" value="PYRASE_CYS"/>
    <property type="match status" value="1"/>
</dbReference>
<dbReference type="PROSITE" id="PS01333">
    <property type="entry name" value="PYRASE_GLU"/>
    <property type="match status" value="1"/>
</dbReference>
<organism>
    <name type="scientific">Photorhabdus laumondii subsp. laumondii (strain DSM 15139 / CIP 105565 / TT01)</name>
    <name type="common">Photorhabdus luminescens subsp. laumondii</name>
    <dbReference type="NCBI Taxonomy" id="243265"/>
    <lineage>
        <taxon>Bacteria</taxon>
        <taxon>Pseudomonadati</taxon>
        <taxon>Pseudomonadota</taxon>
        <taxon>Gammaproteobacteria</taxon>
        <taxon>Enterobacterales</taxon>
        <taxon>Morganellaceae</taxon>
        <taxon>Photorhabdus</taxon>
    </lineage>
</organism>
<reference key="1">
    <citation type="journal article" date="2003" name="Nat. Biotechnol.">
        <title>The genome sequence of the entomopathogenic bacterium Photorhabdus luminescens.</title>
        <authorList>
            <person name="Duchaud E."/>
            <person name="Rusniok C."/>
            <person name="Frangeul L."/>
            <person name="Buchrieser C."/>
            <person name="Givaudan A."/>
            <person name="Taourit S."/>
            <person name="Bocs S."/>
            <person name="Boursaux-Eude C."/>
            <person name="Chandler M."/>
            <person name="Charles J.-F."/>
            <person name="Dassa E."/>
            <person name="Derose R."/>
            <person name="Derzelle S."/>
            <person name="Freyssinet G."/>
            <person name="Gaudriault S."/>
            <person name="Medigue C."/>
            <person name="Lanois A."/>
            <person name="Powell K."/>
            <person name="Siguier P."/>
            <person name="Vincent R."/>
            <person name="Wingate V."/>
            <person name="Zouine M."/>
            <person name="Glaser P."/>
            <person name="Boemare N."/>
            <person name="Danchin A."/>
            <person name="Kunst F."/>
        </authorList>
    </citation>
    <scope>NUCLEOTIDE SEQUENCE [LARGE SCALE GENOMIC DNA]</scope>
    <source>
        <strain>DSM 15139 / CIP 105565 / TT01</strain>
    </source>
</reference>
<keyword id="KW-0963">Cytoplasm</keyword>
<keyword id="KW-0378">Hydrolase</keyword>
<keyword id="KW-0645">Protease</keyword>
<keyword id="KW-1185">Reference proteome</keyword>
<keyword id="KW-0788">Thiol protease</keyword>
<feature type="chain" id="PRO_0000184726" description="Pyrrolidone-carboxylate peptidase 1">
    <location>
        <begin position="1"/>
        <end position="220"/>
    </location>
</feature>
<feature type="active site" evidence="1">
    <location>
        <position position="80"/>
    </location>
</feature>
<feature type="active site" evidence="1">
    <location>
        <position position="143"/>
    </location>
</feature>
<feature type="active site" evidence="1">
    <location>
        <position position="172"/>
    </location>
</feature>
<evidence type="ECO:0000255" key="1">
    <source>
        <dbReference type="HAMAP-Rule" id="MF_00417"/>
    </source>
</evidence>
<protein>
    <recommendedName>
        <fullName evidence="1">Pyrrolidone-carboxylate peptidase 1</fullName>
        <ecNumber evidence="1">3.4.19.3</ecNumber>
    </recommendedName>
    <alternativeName>
        <fullName evidence="1">5-oxoprolyl-peptidase 1</fullName>
    </alternativeName>
    <alternativeName>
        <fullName evidence="1">Pyroglutamyl-peptidase I 1</fullName>
        <shortName evidence="1">PGP-I 1</shortName>
        <shortName evidence="1">Pyrase 1</shortName>
    </alternativeName>
</protein>
<comment type="function">
    <text evidence="1">Removes 5-oxoproline from various penultimate amino acid residues except L-proline.</text>
</comment>
<comment type="catalytic activity">
    <reaction evidence="1">
        <text>Release of an N-terminal pyroglutamyl group from a polypeptide, the second amino acid generally not being Pro.</text>
        <dbReference type="EC" id="3.4.19.3"/>
    </reaction>
</comment>
<comment type="subunit">
    <text evidence="1">Homotetramer.</text>
</comment>
<comment type="subcellular location">
    <subcellularLocation>
        <location evidence="1">Cytoplasm</location>
    </subcellularLocation>
</comment>
<comment type="similarity">
    <text evidence="1">Belongs to the peptidase C15 family.</text>
</comment>
<gene>
    <name evidence="1" type="primary">pcp1</name>
    <name type="ordered locus">plu4303</name>
</gene>
<sequence>MKTVLITAFEPFDGEAINPSWESVRQLQNQQLSGAHIETRQLPCVFNTSLTCLYAAIDEIQPELVIAVGQAGGRPDITVERIAININDARIPDNQGNQPIDTPIVATGPAAYFSTLPIKAIVSGLQTAGVPASISQSAGTYICNHVMYGLLHHLALTYPKVRGGLVRGGFIHIPYLPEQAVKHPGTPSMALETITMALKIAINQALENSGDIAISGGMTH</sequence>